<feature type="chain" id="PRO_1000139386" description="CTP synthase">
    <location>
        <begin position="1"/>
        <end position="535"/>
    </location>
</feature>
<feature type="domain" description="Glutamine amidotransferase type-1" evidence="1">
    <location>
        <begin position="292"/>
        <end position="534"/>
    </location>
</feature>
<feature type="region of interest" description="Amidoligase domain" evidence="1">
    <location>
        <begin position="1"/>
        <end position="267"/>
    </location>
</feature>
<feature type="active site" description="Nucleophile; for glutamine hydrolysis" evidence="1">
    <location>
        <position position="381"/>
    </location>
</feature>
<feature type="active site" evidence="1">
    <location>
        <position position="507"/>
    </location>
</feature>
<feature type="active site" evidence="1">
    <location>
        <position position="509"/>
    </location>
</feature>
<feature type="binding site" evidence="1">
    <location>
        <position position="13"/>
    </location>
    <ligand>
        <name>CTP</name>
        <dbReference type="ChEBI" id="CHEBI:37563"/>
        <note>allosteric inhibitor</note>
    </ligand>
</feature>
<feature type="binding site" evidence="1">
    <location>
        <position position="13"/>
    </location>
    <ligand>
        <name>UTP</name>
        <dbReference type="ChEBI" id="CHEBI:46398"/>
    </ligand>
</feature>
<feature type="binding site" evidence="1">
    <location>
        <begin position="14"/>
        <end position="19"/>
    </location>
    <ligand>
        <name>ATP</name>
        <dbReference type="ChEBI" id="CHEBI:30616"/>
    </ligand>
</feature>
<feature type="binding site" evidence="1">
    <location>
        <position position="54"/>
    </location>
    <ligand>
        <name>L-glutamine</name>
        <dbReference type="ChEBI" id="CHEBI:58359"/>
    </ligand>
</feature>
<feature type="binding site" evidence="1">
    <location>
        <position position="71"/>
    </location>
    <ligand>
        <name>ATP</name>
        <dbReference type="ChEBI" id="CHEBI:30616"/>
    </ligand>
</feature>
<feature type="binding site" evidence="1">
    <location>
        <position position="71"/>
    </location>
    <ligand>
        <name>Mg(2+)</name>
        <dbReference type="ChEBI" id="CHEBI:18420"/>
    </ligand>
</feature>
<feature type="binding site" evidence="1">
    <location>
        <position position="141"/>
    </location>
    <ligand>
        <name>Mg(2+)</name>
        <dbReference type="ChEBI" id="CHEBI:18420"/>
    </ligand>
</feature>
<feature type="binding site" evidence="1">
    <location>
        <begin position="148"/>
        <end position="150"/>
    </location>
    <ligand>
        <name>CTP</name>
        <dbReference type="ChEBI" id="CHEBI:37563"/>
        <note>allosteric inhibitor</note>
    </ligand>
</feature>
<feature type="binding site" evidence="1">
    <location>
        <begin position="188"/>
        <end position="193"/>
    </location>
    <ligand>
        <name>CTP</name>
        <dbReference type="ChEBI" id="CHEBI:37563"/>
        <note>allosteric inhibitor</note>
    </ligand>
</feature>
<feature type="binding site" evidence="1">
    <location>
        <begin position="188"/>
        <end position="193"/>
    </location>
    <ligand>
        <name>UTP</name>
        <dbReference type="ChEBI" id="CHEBI:46398"/>
    </ligand>
</feature>
<feature type="binding site" evidence="1">
    <location>
        <position position="224"/>
    </location>
    <ligand>
        <name>CTP</name>
        <dbReference type="ChEBI" id="CHEBI:37563"/>
        <note>allosteric inhibitor</note>
    </ligand>
</feature>
<feature type="binding site" evidence="1">
    <location>
        <position position="224"/>
    </location>
    <ligand>
        <name>UTP</name>
        <dbReference type="ChEBI" id="CHEBI:46398"/>
    </ligand>
</feature>
<feature type="binding site" evidence="1">
    <location>
        <begin position="240"/>
        <end position="242"/>
    </location>
    <ligand>
        <name>ATP</name>
        <dbReference type="ChEBI" id="CHEBI:30616"/>
    </ligand>
</feature>
<feature type="binding site" evidence="1">
    <location>
        <position position="354"/>
    </location>
    <ligand>
        <name>L-glutamine</name>
        <dbReference type="ChEBI" id="CHEBI:58359"/>
    </ligand>
</feature>
<feature type="binding site" evidence="1">
    <location>
        <begin position="382"/>
        <end position="385"/>
    </location>
    <ligand>
        <name>L-glutamine</name>
        <dbReference type="ChEBI" id="CHEBI:58359"/>
    </ligand>
</feature>
<feature type="binding site" evidence="1">
    <location>
        <position position="405"/>
    </location>
    <ligand>
        <name>L-glutamine</name>
        <dbReference type="ChEBI" id="CHEBI:58359"/>
    </ligand>
</feature>
<feature type="binding site" evidence="1">
    <location>
        <position position="462"/>
    </location>
    <ligand>
        <name>L-glutamine</name>
        <dbReference type="ChEBI" id="CHEBI:58359"/>
    </ligand>
</feature>
<organism>
    <name type="scientific">Bacillus mycoides (strain KBAB4)</name>
    <name type="common">Bacillus weihenstephanensis</name>
    <dbReference type="NCBI Taxonomy" id="315730"/>
    <lineage>
        <taxon>Bacteria</taxon>
        <taxon>Bacillati</taxon>
        <taxon>Bacillota</taxon>
        <taxon>Bacilli</taxon>
        <taxon>Bacillales</taxon>
        <taxon>Bacillaceae</taxon>
        <taxon>Bacillus</taxon>
        <taxon>Bacillus cereus group</taxon>
    </lineage>
</organism>
<evidence type="ECO:0000255" key="1">
    <source>
        <dbReference type="HAMAP-Rule" id="MF_01227"/>
    </source>
</evidence>
<dbReference type="EC" id="6.3.4.2" evidence="1"/>
<dbReference type="EMBL" id="CP000903">
    <property type="protein sequence ID" value="ABY46282.1"/>
    <property type="molecule type" value="Genomic_DNA"/>
</dbReference>
<dbReference type="RefSeq" id="WP_002016314.1">
    <property type="nucleotide sequence ID" value="NC_010184.1"/>
</dbReference>
<dbReference type="SMR" id="A9VSD6"/>
<dbReference type="GeneID" id="66265106"/>
<dbReference type="KEGG" id="bwe:BcerKBAB4_5136"/>
<dbReference type="eggNOG" id="COG0504">
    <property type="taxonomic scope" value="Bacteria"/>
</dbReference>
<dbReference type="HOGENOM" id="CLU_011675_5_0_9"/>
<dbReference type="UniPathway" id="UPA00159">
    <property type="reaction ID" value="UER00277"/>
</dbReference>
<dbReference type="Proteomes" id="UP000002154">
    <property type="component" value="Chromosome"/>
</dbReference>
<dbReference type="GO" id="GO:0005829">
    <property type="term" value="C:cytosol"/>
    <property type="evidence" value="ECO:0007669"/>
    <property type="project" value="TreeGrafter"/>
</dbReference>
<dbReference type="GO" id="GO:0005524">
    <property type="term" value="F:ATP binding"/>
    <property type="evidence" value="ECO:0007669"/>
    <property type="project" value="UniProtKB-KW"/>
</dbReference>
<dbReference type="GO" id="GO:0003883">
    <property type="term" value="F:CTP synthase activity"/>
    <property type="evidence" value="ECO:0007669"/>
    <property type="project" value="UniProtKB-UniRule"/>
</dbReference>
<dbReference type="GO" id="GO:0004359">
    <property type="term" value="F:glutaminase activity"/>
    <property type="evidence" value="ECO:0007669"/>
    <property type="project" value="RHEA"/>
</dbReference>
<dbReference type="GO" id="GO:0042802">
    <property type="term" value="F:identical protein binding"/>
    <property type="evidence" value="ECO:0007669"/>
    <property type="project" value="TreeGrafter"/>
</dbReference>
<dbReference type="GO" id="GO:0046872">
    <property type="term" value="F:metal ion binding"/>
    <property type="evidence" value="ECO:0007669"/>
    <property type="project" value="UniProtKB-KW"/>
</dbReference>
<dbReference type="GO" id="GO:0044210">
    <property type="term" value="P:'de novo' CTP biosynthetic process"/>
    <property type="evidence" value="ECO:0007669"/>
    <property type="project" value="UniProtKB-UniRule"/>
</dbReference>
<dbReference type="GO" id="GO:0019856">
    <property type="term" value="P:pyrimidine nucleobase biosynthetic process"/>
    <property type="evidence" value="ECO:0007669"/>
    <property type="project" value="TreeGrafter"/>
</dbReference>
<dbReference type="CDD" id="cd03113">
    <property type="entry name" value="CTPS_N"/>
    <property type="match status" value="1"/>
</dbReference>
<dbReference type="CDD" id="cd01746">
    <property type="entry name" value="GATase1_CTP_Synthase"/>
    <property type="match status" value="1"/>
</dbReference>
<dbReference type="FunFam" id="3.40.50.300:FF:000009">
    <property type="entry name" value="CTP synthase"/>
    <property type="match status" value="1"/>
</dbReference>
<dbReference type="FunFam" id="3.40.50.880:FF:000002">
    <property type="entry name" value="CTP synthase"/>
    <property type="match status" value="1"/>
</dbReference>
<dbReference type="Gene3D" id="3.40.50.880">
    <property type="match status" value="1"/>
</dbReference>
<dbReference type="Gene3D" id="3.40.50.300">
    <property type="entry name" value="P-loop containing nucleotide triphosphate hydrolases"/>
    <property type="match status" value="1"/>
</dbReference>
<dbReference type="HAMAP" id="MF_01227">
    <property type="entry name" value="PyrG"/>
    <property type="match status" value="1"/>
</dbReference>
<dbReference type="InterPro" id="IPR029062">
    <property type="entry name" value="Class_I_gatase-like"/>
</dbReference>
<dbReference type="InterPro" id="IPR004468">
    <property type="entry name" value="CTP_synthase"/>
</dbReference>
<dbReference type="InterPro" id="IPR017456">
    <property type="entry name" value="CTP_synthase_N"/>
</dbReference>
<dbReference type="InterPro" id="IPR017926">
    <property type="entry name" value="GATASE"/>
</dbReference>
<dbReference type="InterPro" id="IPR033828">
    <property type="entry name" value="GATase1_CTP_Synthase"/>
</dbReference>
<dbReference type="InterPro" id="IPR027417">
    <property type="entry name" value="P-loop_NTPase"/>
</dbReference>
<dbReference type="NCBIfam" id="NF003792">
    <property type="entry name" value="PRK05380.1"/>
    <property type="match status" value="1"/>
</dbReference>
<dbReference type="NCBIfam" id="TIGR00337">
    <property type="entry name" value="PyrG"/>
    <property type="match status" value="1"/>
</dbReference>
<dbReference type="PANTHER" id="PTHR11550">
    <property type="entry name" value="CTP SYNTHASE"/>
    <property type="match status" value="1"/>
</dbReference>
<dbReference type="PANTHER" id="PTHR11550:SF0">
    <property type="entry name" value="CTP SYNTHASE-RELATED"/>
    <property type="match status" value="1"/>
</dbReference>
<dbReference type="Pfam" id="PF06418">
    <property type="entry name" value="CTP_synth_N"/>
    <property type="match status" value="1"/>
</dbReference>
<dbReference type="Pfam" id="PF00117">
    <property type="entry name" value="GATase"/>
    <property type="match status" value="1"/>
</dbReference>
<dbReference type="SUPFAM" id="SSF52317">
    <property type="entry name" value="Class I glutamine amidotransferase-like"/>
    <property type="match status" value="1"/>
</dbReference>
<dbReference type="SUPFAM" id="SSF52540">
    <property type="entry name" value="P-loop containing nucleoside triphosphate hydrolases"/>
    <property type="match status" value="1"/>
</dbReference>
<dbReference type="PROSITE" id="PS51273">
    <property type="entry name" value="GATASE_TYPE_1"/>
    <property type="match status" value="1"/>
</dbReference>
<protein>
    <recommendedName>
        <fullName evidence="1">CTP synthase</fullName>
        <ecNumber evidence="1">6.3.4.2</ecNumber>
    </recommendedName>
    <alternativeName>
        <fullName evidence="1">Cytidine 5'-triphosphate synthase</fullName>
    </alternativeName>
    <alternativeName>
        <fullName evidence="1">Cytidine triphosphate synthetase</fullName>
        <shortName evidence="1">CTP synthetase</shortName>
        <shortName evidence="1">CTPS</shortName>
    </alternativeName>
    <alternativeName>
        <fullName evidence="1">UTP--ammonia ligase</fullName>
    </alternativeName>
</protein>
<name>PYRG_BACMK</name>
<accession>A9VSD6</accession>
<sequence length="535" mass="59649">MTKYIFVTGGVVSSLGKGITAASLGRLLKNRGLNVTIQKFDPYINVDPGTMSPYQHGEVFVTDDGAETDLDLGHYERFIDINLNKYSNVTTGKIYSSVLQKERRGEYLGGTVQVIPHITNEIKERVYRSGRETNADVVITEIGGTVGDIESLPFLEAIRQIKSDIGRDNVMYIHCTLIPYLKAAGEMKTKPTQHSVKELRSLGIQPNIIVVRTELPVSQDMKDKLALFCDIDTKAVIEARDADTLYAVPLSLQEQNMDQIVCDHLKLDNPAADMTDWTALVNKVRNLSKKTKIALVGKYVELQDAYISVVEALRHAGYSFDTDVEVKWVNAEHVTAENVKELVGDTDGILVPGGFGDRGVEGKIVAIQYARENKVPFLGICLGMQLASIEFARNVLGLEGANSSEINPDTPYAIIDLLPEQKDVEDLGGTLRLGLYPCKLAEETNAYNAYNEPVVYERHRHRYEFNNQFRPDMEKAGFVFSGTSPDGRLVEIIELQDHPWFVAAQFHPELVSRPNRPQPLFHDFVSASITNKESK</sequence>
<comment type="function">
    <text evidence="1">Catalyzes the ATP-dependent amination of UTP to CTP with either L-glutamine or ammonia as the source of nitrogen. Regulates intracellular CTP levels through interactions with the four ribonucleotide triphosphates.</text>
</comment>
<comment type="catalytic activity">
    <reaction evidence="1">
        <text>UTP + L-glutamine + ATP + H2O = CTP + L-glutamate + ADP + phosphate + 2 H(+)</text>
        <dbReference type="Rhea" id="RHEA:26426"/>
        <dbReference type="ChEBI" id="CHEBI:15377"/>
        <dbReference type="ChEBI" id="CHEBI:15378"/>
        <dbReference type="ChEBI" id="CHEBI:29985"/>
        <dbReference type="ChEBI" id="CHEBI:30616"/>
        <dbReference type="ChEBI" id="CHEBI:37563"/>
        <dbReference type="ChEBI" id="CHEBI:43474"/>
        <dbReference type="ChEBI" id="CHEBI:46398"/>
        <dbReference type="ChEBI" id="CHEBI:58359"/>
        <dbReference type="ChEBI" id="CHEBI:456216"/>
        <dbReference type="EC" id="6.3.4.2"/>
    </reaction>
</comment>
<comment type="catalytic activity">
    <reaction evidence="1">
        <text>L-glutamine + H2O = L-glutamate + NH4(+)</text>
        <dbReference type="Rhea" id="RHEA:15889"/>
        <dbReference type="ChEBI" id="CHEBI:15377"/>
        <dbReference type="ChEBI" id="CHEBI:28938"/>
        <dbReference type="ChEBI" id="CHEBI:29985"/>
        <dbReference type="ChEBI" id="CHEBI:58359"/>
    </reaction>
</comment>
<comment type="catalytic activity">
    <reaction evidence="1">
        <text>UTP + NH4(+) + ATP = CTP + ADP + phosphate + 2 H(+)</text>
        <dbReference type="Rhea" id="RHEA:16597"/>
        <dbReference type="ChEBI" id="CHEBI:15378"/>
        <dbReference type="ChEBI" id="CHEBI:28938"/>
        <dbReference type="ChEBI" id="CHEBI:30616"/>
        <dbReference type="ChEBI" id="CHEBI:37563"/>
        <dbReference type="ChEBI" id="CHEBI:43474"/>
        <dbReference type="ChEBI" id="CHEBI:46398"/>
        <dbReference type="ChEBI" id="CHEBI:456216"/>
    </reaction>
</comment>
<comment type="activity regulation">
    <text evidence="1">Allosterically activated by GTP, when glutamine is the substrate; GTP has no effect on the reaction when ammonia is the substrate. The allosteric effector GTP functions by stabilizing the protein conformation that binds the tetrahedral intermediate(s) formed during glutamine hydrolysis. Inhibited by the product CTP, via allosteric rather than competitive inhibition.</text>
</comment>
<comment type="pathway">
    <text evidence="1">Pyrimidine metabolism; CTP biosynthesis via de novo pathway; CTP from UDP: step 2/2.</text>
</comment>
<comment type="subunit">
    <text evidence="1">Homotetramer.</text>
</comment>
<comment type="miscellaneous">
    <text evidence="1">CTPSs have evolved a hybrid strategy for distinguishing between UTP and CTP. The overlapping regions of the product feedback inhibitory and substrate sites recognize a common feature in both compounds, the triphosphate moiety. To differentiate isosteric substrate and product pyrimidine rings, an additional pocket far from the expected kinase/ligase catalytic site, specifically recognizes the cytosine and ribose portions of the product inhibitor.</text>
</comment>
<comment type="similarity">
    <text evidence="1">Belongs to the CTP synthase family.</text>
</comment>
<reference key="1">
    <citation type="journal article" date="2008" name="Chem. Biol. Interact.">
        <title>Extending the Bacillus cereus group genomics to putative food-borne pathogens of different toxicity.</title>
        <authorList>
            <person name="Lapidus A."/>
            <person name="Goltsman E."/>
            <person name="Auger S."/>
            <person name="Galleron N."/>
            <person name="Segurens B."/>
            <person name="Dossat C."/>
            <person name="Land M.L."/>
            <person name="Broussolle V."/>
            <person name="Brillard J."/>
            <person name="Guinebretiere M.-H."/>
            <person name="Sanchis V."/>
            <person name="Nguen-the C."/>
            <person name="Lereclus D."/>
            <person name="Richardson P."/>
            <person name="Wincker P."/>
            <person name="Weissenbach J."/>
            <person name="Ehrlich S.D."/>
            <person name="Sorokin A."/>
        </authorList>
    </citation>
    <scope>NUCLEOTIDE SEQUENCE [LARGE SCALE GENOMIC DNA]</scope>
    <source>
        <strain>KBAB4</strain>
    </source>
</reference>
<gene>
    <name evidence="1" type="primary">pyrG</name>
    <name type="ordered locus">BcerKBAB4_5136</name>
</gene>
<proteinExistence type="inferred from homology"/>
<keyword id="KW-0067">ATP-binding</keyword>
<keyword id="KW-0315">Glutamine amidotransferase</keyword>
<keyword id="KW-0436">Ligase</keyword>
<keyword id="KW-0460">Magnesium</keyword>
<keyword id="KW-0479">Metal-binding</keyword>
<keyword id="KW-0547">Nucleotide-binding</keyword>
<keyword id="KW-0665">Pyrimidine biosynthesis</keyword>